<dbReference type="EMBL" id="CP001145">
    <property type="protein sequence ID" value="ACI18201.1"/>
    <property type="molecule type" value="Genomic_DNA"/>
</dbReference>
<dbReference type="RefSeq" id="WP_012544851.1">
    <property type="nucleotide sequence ID" value="NC_011295.1"/>
</dbReference>
<dbReference type="SMR" id="B5Y985"/>
<dbReference type="STRING" id="309798.COPRO5265_1010"/>
<dbReference type="KEGG" id="cpo:COPRO5265_1010"/>
<dbReference type="eggNOG" id="COG0090">
    <property type="taxonomic scope" value="Bacteria"/>
</dbReference>
<dbReference type="HOGENOM" id="CLU_036235_2_1_9"/>
<dbReference type="OrthoDB" id="9778722at2"/>
<dbReference type="Proteomes" id="UP000001732">
    <property type="component" value="Chromosome"/>
</dbReference>
<dbReference type="GO" id="GO:0015934">
    <property type="term" value="C:large ribosomal subunit"/>
    <property type="evidence" value="ECO:0007669"/>
    <property type="project" value="InterPro"/>
</dbReference>
<dbReference type="GO" id="GO:0019843">
    <property type="term" value="F:rRNA binding"/>
    <property type="evidence" value="ECO:0007669"/>
    <property type="project" value="UniProtKB-UniRule"/>
</dbReference>
<dbReference type="GO" id="GO:0003735">
    <property type="term" value="F:structural constituent of ribosome"/>
    <property type="evidence" value="ECO:0007669"/>
    <property type="project" value="InterPro"/>
</dbReference>
<dbReference type="GO" id="GO:0016740">
    <property type="term" value="F:transferase activity"/>
    <property type="evidence" value="ECO:0007669"/>
    <property type="project" value="InterPro"/>
</dbReference>
<dbReference type="GO" id="GO:0002181">
    <property type="term" value="P:cytoplasmic translation"/>
    <property type="evidence" value="ECO:0007669"/>
    <property type="project" value="TreeGrafter"/>
</dbReference>
<dbReference type="FunFam" id="2.30.30.30:FF:000001">
    <property type="entry name" value="50S ribosomal protein L2"/>
    <property type="match status" value="1"/>
</dbReference>
<dbReference type="FunFam" id="2.40.50.140:FF:000003">
    <property type="entry name" value="50S ribosomal protein L2"/>
    <property type="match status" value="1"/>
</dbReference>
<dbReference type="FunFam" id="4.10.950.10:FF:000001">
    <property type="entry name" value="50S ribosomal protein L2"/>
    <property type="match status" value="1"/>
</dbReference>
<dbReference type="Gene3D" id="2.30.30.30">
    <property type="match status" value="1"/>
</dbReference>
<dbReference type="Gene3D" id="2.40.50.140">
    <property type="entry name" value="Nucleic acid-binding proteins"/>
    <property type="match status" value="1"/>
</dbReference>
<dbReference type="Gene3D" id="4.10.950.10">
    <property type="entry name" value="Ribosomal protein L2, domain 3"/>
    <property type="match status" value="1"/>
</dbReference>
<dbReference type="HAMAP" id="MF_01320_B">
    <property type="entry name" value="Ribosomal_uL2_B"/>
    <property type="match status" value="1"/>
</dbReference>
<dbReference type="InterPro" id="IPR012340">
    <property type="entry name" value="NA-bd_OB-fold"/>
</dbReference>
<dbReference type="InterPro" id="IPR014722">
    <property type="entry name" value="Rib_uL2_dom2"/>
</dbReference>
<dbReference type="InterPro" id="IPR002171">
    <property type="entry name" value="Ribosomal_uL2"/>
</dbReference>
<dbReference type="InterPro" id="IPR005880">
    <property type="entry name" value="Ribosomal_uL2_bac/org-type"/>
</dbReference>
<dbReference type="InterPro" id="IPR022669">
    <property type="entry name" value="Ribosomal_uL2_C"/>
</dbReference>
<dbReference type="InterPro" id="IPR022671">
    <property type="entry name" value="Ribosomal_uL2_CS"/>
</dbReference>
<dbReference type="InterPro" id="IPR014726">
    <property type="entry name" value="Ribosomal_uL2_dom3"/>
</dbReference>
<dbReference type="InterPro" id="IPR022666">
    <property type="entry name" value="Ribosomal_uL2_RNA-bd_dom"/>
</dbReference>
<dbReference type="InterPro" id="IPR008991">
    <property type="entry name" value="Translation_prot_SH3-like_sf"/>
</dbReference>
<dbReference type="NCBIfam" id="TIGR01171">
    <property type="entry name" value="rplB_bact"/>
    <property type="match status" value="1"/>
</dbReference>
<dbReference type="PANTHER" id="PTHR13691:SF5">
    <property type="entry name" value="LARGE RIBOSOMAL SUBUNIT PROTEIN UL2M"/>
    <property type="match status" value="1"/>
</dbReference>
<dbReference type="PANTHER" id="PTHR13691">
    <property type="entry name" value="RIBOSOMAL PROTEIN L2"/>
    <property type="match status" value="1"/>
</dbReference>
<dbReference type="Pfam" id="PF00181">
    <property type="entry name" value="Ribosomal_L2"/>
    <property type="match status" value="1"/>
</dbReference>
<dbReference type="Pfam" id="PF03947">
    <property type="entry name" value="Ribosomal_L2_C"/>
    <property type="match status" value="1"/>
</dbReference>
<dbReference type="PIRSF" id="PIRSF002158">
    <property type="entry name" value="Ribosomal_L2"/>
    <property type="match status" value="1"/>
</dbReference>
<dbReference type="SMART" id="SM01383">
    <property type="entry name" value="Ribosomal_L2"/>
    <property type="match status" value="1"/>
</dbReference>
<dbReference type="SMART" id="SM01382">
    <property type="entry name" value="Ribosomal_L2_C"/>
    <property type="match status" value="1"/>
</dbReference>
<dbReference type="SUPFAM" id="SSF50249">
    <property type="entry name" value="Nucleic acid-binding proteins"/>
    <property type="match status" value="1"/>
</dbReference>
<dbReference type="SUPFAM" id="SSF50104">
    <property type="entry name" value="Translation proteins SH3-like domain"/>
    <property type="match status" value="1"/>
</dbReference>
<dbReference type="PROSITE" id="PS00467">
    <property type="entry name" value="RIBOSOMAL_L2"/>
    <property type="match status" value="1"/>
</dbReference>
<gene>
    <name evidence="1" type="primary">rplB</name>
    <name type="ordered locus">COPRO5265_1010</name>
</gene>
<accession>B5Y985</accession>
<sequence>MPVRRYKPVTSSTRHRVVIDYKSVITKTEPEKSLLAPLKKSGGRNNAGRISVRFRGGGHKRRYRIIDFKRDKDGIPGKITSIEYDPNRTAFIALVTYADGEKRYILAPDEIEVGDVIISGEEAPIRVGNALPLSKIPTGTTIHNIELYPGRGGQLVRSAGTWAQLMAKEGDYAHVRLPSGEIRLINVKCKATIGRVSNLDHENVSSGKAGRTRWLGRRPQVRGTAMNPVDHPHGGGEGKSPIGHPSPLSPWGWKTLGWKTRRGKKPSDKFIVKRRK</sequence>
<reference key="1">
    <citation type="submission" date="2008-08" db="EMBL/GenBank/DDBJ databases">
        <title>The complete genome sequence of Coprothermobacter proteolyticus strain ATCC 5245 / DSM 5265 / BT.</title>
        <authorList>
            <person name="Dodson R.J."/>
            <person name="Durkin A.S."/>
            <person name="Wu M."/>
            <person name="Eisen J."/>
            <person name="Sutton G."/>
        </authorList>
    </citation>
    <scope>NUCLEOTIDE SEQUENCE [LARGE SCALE GENOMIC DNA]</scope>
    <source>
        <strain>ATCC 35245 / DSM 5265 / OCM 4 / BT</strain>
    </source>
</reference>
<feature type="chain" id="PRO_1000141531" description="Large ribosomal subunit protein uL2">
    <location>
        <begin position="1"/>
        <end position="276"/>
    </location>
</feature>
<feature type="region of interest" description="Disordered" evidence="2">
    <location>
        <begin position="203"/>
        <end position="276"/>
    </location>
</feature>
<feature type="compositionally biased region" description="Basic residues" evidence="2">
    <location>
        <begin position="210"/>
        <end position="220"/>
    </location>
</feature>
<feature type="compositionally biased region" description="Basic and acidic residues" evidence="2">
    <location>
        <begin position="265"/>
        <end position="276"/>
    </location>
</feature>
<evidence type="ECO:0000255" key="1">
    <source>
        <dbReference type="HAMAP-Rule" id="MF_01320"/>
    </source>
</evidence>
<evidence type="ECO:0000256" key="2">
    <source>
        <dbReference type="SAM" id="MobiDB-lite"/>
    </source>
</evidence>
<evidence type="ECO:0000305" key="3"/>
<proteinExistence type="inferred from homology"/>
<comment type="function">
    <text evidence="1">One of the primary rRNA binding proteins. Required for association of the 30S and 50S subunits to form the 70S ribosome, for tRNA binding and peptide bond formation. It has been suggested to have peptidyltransferase activity; this is somewhat controversial. Makes several contacts with the 16S rRNA in the 70S ribosome.</text>
</comment>
<comment type="subunit">
    <text evidence="1">Part of the 50S ribosomal subunit. Forms a bridge to the 30S subunit in the 70S ribosome.</text>
</comment>
<comment type="similarity">
    <text evidence="1">Belongs to the universal ribosomal protein uL2 family.</text>
</comment>
<organism>
    <name type="scientific">Coprothermobacter proteolyticus (strain ATCC 35245 / DSM 5265 / OCM 4 / BT)</name>
    <dbReference type="NCBI Taxonomy" id="309798"/>
    <lineage>
        <taxon>Bacteria</taxon>
        <taxon>Pseudomonadati</taxon>
        <taxon>Coprothermobacterota</taxon>
        <taxon>Coprothermobacteria</taxon>
        <taxon>Coprothermobacterales</taxon>
        <taxon>Coprothermobacteraceae</taxon>
        <taxon>Coprothermobacter</taxon>
    </lineage>
</organism>
<protein>
    <recommendedName>
        <fullName evidence="1">Large ribosomal subunit protein uL2</fullName>
    </recommendedName>
    <alternativeName>
        <fullName evidence="3">50S ribosomal protein L2</fullName>
    </alternativeName>
</protein>
<keyword id="KW-1185">Reference proteome</keyword>
<keyword id="KW-0687">Ribonucleoprotein</keyword>
<keyword id="KW-0689">Ribosomal protein</keyword>
<keyword id="KW-0694">RNA-binding</keyword>
<keyword id="KW-0699">rRNA-binding</keyword>
<name>RL2_COPPD</name>